<accession>P02501</accession>
<feature type="chain" id="PRO_0000125875" description="Alpha-crystallin A chain">
    <location>
        <begin position="1"/>
        <end position="173"/>
    </location>
</feature>
<feature type="domain" description="sHSP" evidence="4">
    <location>
        <begin position="52"/>
        <end position="162"/>
    </location>
</feature>
<feature type="region of interest" description="Required for complex formation with BFSP1 and BFSP2" evidence="3">
    <location>
        <begin position="1"/>
        <end position="63"/>
    </location>
</feature>
<feature type="region of interest" description="Disordered" evidence="5">
    <location>
        <begin position="146"/>
        <end position="173"/>
    </location>
</feature>
<feature type="compositionally biased region" description="Basic and acidic residues" evidence="5">
    <location>
        <begin position="151"/>
        <end position="167"/>
    </location>
</feature>
<feature type="binding site" evidence="2">
    <location>
        <position position="100"/>
    </location>
    <ligand>
        <name>Zn(2+)</name>
        <dbReference type="ChEBI" id="CHEBI:29105"/>
        <label>1</label>
    </ligand>
</feature>
<feature type="binding site" evidence="2">
    <location>
        <position position="102"/>
    </location>
    <ligand>
        <name>Zn(2+)</name>
        <dbReference type="ChEBI" id="CHEBI:29105"/>
        <label>1</label>
    </ligand>
</feature>
<feature type="binding site" evidence="2">
    <location>
        <position position="107"/>
    </location>
    <ligand>
        <name>Zn(2+)</name>
        <dbReference type="ChEBI" id="CHEBI:29105"/>
        <label>2</label>
    </ligand>
</feature>
<feature type="binding site" evidence="2">
    <location>
        <position position="154"/>
    </location>
    <ligand>
        <name>Zn(2+)</name>
        <dbReference type="ChEBI" id="CHEBI:29105"/>
        <label>3</label>
    </ligand>
</feature>
<feature type="modified residue" description="N-acetylmethionine" evidence="6">
    <location>
        <position position="1"/>
    </location>
</feature>
<feature type="modified residue" description="Deamidated glutamine; partial" evidence="1">
    <location>
        <position position="6"/>
    </location>
</feature>
<feature type="modified residue" description="Phosphoserine" evidence="3">
    <location>
        <position position="45"/>
    </location>
</feature>
<feature type="modified residue" description="Deamidated glutamine; partial" evidence="1">
    <location>
        <position position="50"/>
    </location>
</feature>
<feature type="modified residue" description="N6-acetyllysine" evidence="3">
    <location>
        <position position="99"/>
    </location>
</feature>
<feature type="modified residue" description="Deamidated asparagine; partial" evidence="1">
    <location>
        <position position="101"/>
    </location>
</feature>
<feature type="modified residue" description="Phosphoserine" evidence="2">
    <location>
        <position position="122"/>
    </location>
</feature>
<feature type="modified residue" description="Deamidated asparagine; partial" evidence="1">
    <location>
        <position position="123"/>
    </location>
</feature>
<feature type="modified residue" description="Deamidated glutamine; partial" evidence="1">
    <location>
        <position position="147"/>
    </location>
</feature>
<feature type="glycosylation site" description="O-linked (GlcNAc) serine" evidence="1">
    <location>
        <position position="162"/>
    </location>
</feature>
<feature type="disulfide bond" evidence="3">
    <location>
        <begin position="131"/>
        <end position="142"/>
    </location>
</feature>
<evidence type="ECO:0000250" key="1"/>
<evidence type="ECO:0000250" key="2">
    <source>
        <dbReference type="UniProtKB" id="P02470"/>
    </source>
</evidence>
<evidence type="ECO:0000250" key="3">
    <source>
        <dbReference type="UniProtKB" id="P02489"/>
    </source>
</evidence>
<evidence type="ECO:0000255" key="4">
    <source>
        <dbReference type="PROSITE-ProRule" id="PRU00285"/>
    </source>
</evidence>
<evidence type="ECO:0000256" key="5">
    <source>
        <dbReference type="SAM" id="MobiDB-lite"/>
    </source>
</evidence>
<evidence type="ECO:0000269" key="6">
    <source>
    </source>
</evidence>
<protein>
    <recommendedName>
        <fullName>Alpha-crystallin A chain</fullName>
    </recommendedName>
</protein>
<gene>
    <name type="primary">CRYAA</name>
</gene>
<sequence length="173" mass="19908">MDVTIQHPWFKRALGPFYPSRLFDQFFGEGLFEYDLLPFLSSTISPYYRQSLFRTVLDSGISEVRSDRDQFLILLDVKHFSPEELTVKVLDDFVEIHGKHNERQDDHGYISREFHRRYRLPSNVDQSALSCSLSADGMLTFCGPKVQSSMDDGHSERAIPVSREEKPSSVPSS</sequence>
<name>CRYAA_ORYAF</name>
<dbReference type="PIR" id="A02904">
    <property type="entry name" value="CYOYAA"/>
</dbReference>
<dbReference type="SMR" id="P02501"/>
<dbReference type="GlyCosmos" id="P02501">
    <property type="glycosylation" value="1 site, No reported glycans"/>
</dbReference>
<dbReference type="iPTMnet" id="P02501"/>
<dbReference type="GO" id="GO:0005737">
    <property type="term" value="C:cytoplasm"/>
    <property type="evidence" value="ECO:0000250"/>
    <property type="project" value="UniProtKB"/>
</dbReference>
<dbReference type="GO" id="GO:0005634">
    <property type="term" value="C:nucleus"/>
    <property type="evidence" value="ECO:0000250"/>
    <property type="project" value="UniProtKB"/>
</dbReference>
<dbReference type="GO" id="GO:0046872">
    <property type="term" value="F:metal ion binding"/>
    <property type="evidence" value="ECO:0007669"/>
    <property type="project" value="UniProtKB-KW"/>
</dbReference>
<dbReference type="GO" id="GO:0005212">
    <property type="term" value="F:structural constituent of eye lens"/>
    <property type="evidence" value="ECO:0007669"/>
    <property type="project" value="UniProtKB-KW"/>
</dbReference>
<dbReference type="GO" id="GO:0051082">
    <property type="term" value="F:unfolded protein binding"/>
    <property type="evidence" value="ECO:0007669"/>
    <property type="project" value="TreeGrafter"/>
</dbReference>
<dbReference type="GO" id="GO:0002088">
    <property type="term" value="P:lens development in camera-type eye"/>
    <property type="evidence" value="ECO:0007669"/>
    <property type="project" value="TreeGrafter"/>
</dbReference>
<dbReference type="GO" id="GO:0043066">
    <property type="term" value="P:negative regulation of apoptotic process"/>
    <property type="evidence" value="ECO:0007669"/>
    <property type="project" value="TreeGrafter"/>
</dbReference>
<dbReference type="GO" id="GO:0042026">
    <property type="term" value="P:protein refolding"/>
    <property type="evidence" value="ECO:0007669"/>
    <property type="project" value="TreeGrafter"/>
</dbReference>
<dbReference type="GO" id="GO:0009408">
    <property type="term" value="P:response to heat"/>
    <property type="evidence" value="ECO:0007669"/>
    <property type="project" value="TreeGrafter"/>
</dbReference>
<dbReference type="FunFam" id="2.60.40.790:FF:000008">
    <property type="entry name" value="Alpha-crystallin A chain"/>
    <property type="match status" value="1"/>
</dbReference>
<dbReference type="Gene3D" id="2.60.40.790">
    <property type="match status" value="1"/>
</dbReference>
<dbReference type="InterPro" id="IPR002068">
    <property type="entry name" value="A-crystallin/Hsp20_dom"/>
</dbReference>
<dbReference type="InterPro" id="IPR055269">
    <property type="entry name" value="Alpha-crystallin/HSP_16"/>
</dbReference>
<dbReference type="InterPro" id="IPR001436">
    <property type="entry name" value="Alpha-crystallin/sHSP_animal"/>
</dbReference>
<dbReference type="InterPro" id="IPR003090">
    <property type="entry name" value="Alpha-crystallin_N"/>
</dbReference>
<dbReference type="InterPro" id="IPR008978">
    <property type="entry name" value="HSP20-like_chaperone"/>
</dbReference>
<dbReference type="PANTHER" id="PTHR45640:SF14">
    <property type="entry name" value="ALPHA-CRYSTALLIN A CHAIN"/>
    <property type="match status" value="1"/>
</dbReference>
<dbReference type="PANTHER" id="PTHR45640">
    <property type="entry name" value="HEAT SHOCK PROTEIN HSP-12.2-RELATED"/>
    <property type="match status" value="1"/>
</dbReference>
<dbReference type="Pfam" id="PF00525">
    <property type="entry name" value="Crystallin"/>
    <property type="match status" value="1"/>
</dbReference>
<dbReference type="Pfam" id="PF00011">
    <property type="entry name" value="HSP20"/>
    <property type="match status" value="1"/>
</dbReference>
<dbReference type="PIRSF" id="PIRSF036514">
    <property type="entry name" value="Sm_HSP_B1"/>
    <property type="match status" value="1"/>
</dbReference>
<dbReference type="PRINTS" id="PR00299">
    <property type="entry name" value="ACRYSTALLIN"/>
</dbReference>
<dbReference type="SUPFAM" id="SSF49764">
    <property type="entry name" value="HSP20-like chaperones"/>
    <property type="match status" value="1"/>
</dbReference>
<dbReference type="PROSITE" id="PS01031">
    <property type="entry name" value="SHSP"/>
    <property type="match status" value="1"/>
</dbReference>
<reference key="1">
    <citation type="journal article" date="1981" name="Nature">
        <title>Relationship of aardvark to elephants, hyraxes and sea cows from alpha-crystallin sequences.</title>
        <authorList>
            <person name="de Jong W.W."/>
            <person name="Zweers A."/>
            <person name="Goodman M."/>
        </authorList>
    </citation>
    <scope>PARTIAL PROTEIN SEQUENCE</scope>
    <scope>ACETYLATION AT MET-1</scope>
</reference>
<keyword id="KW-0007">Acetylation</keyword>
<keyword id="KW-0143">Chaperone</keyword>
<keyword id="KW-0963">Cytoplasm</keyword>
<keyword id="KW-0903">Direct protein sequencing</keyword>
<keyword id="KW-1015">Disulfide bond</keyword>
<keyword id="KW-0273">Eye lens protein</keyword>
<keyword id="KW-0325">Glycoprotein</keyword>
<keyword id="KW-0479">Metal-binding</keyword>
<keyword id="KW-0488">Methylation</keyword>
<keyword id="KW-0539">Nucleus</keyword>
<keyword id="KW-0597">Phosphoprotein</keyword>
<keyword id="KW-0862">Zinc</keyword>
<proteinExistence type="evidence at protein level"/>
<comment type="function">
    <text evidence="3">Contributes to the transparency and refractive index of the lens. In its oxidized form (absence of intramolecular disulfide bond), acts as a chaperone, preventing aggregation of various proteins under a wide range of stress conditions. Required for the correct formation of lens intermediate filaments as part of a complex composed of BFSP1, BFSP2 and CRYAA.</text>
</comment>
<comment type="subunit">
    <text evidence="2 3">Heteromer composed of three CRYAA and one CRYAB subunits. Inter-subunit bridging via zinc ions enhances stability, which is crucial as there is no protein turn over in the lens. Can also form homodimers and homotetramers (dimers of dimers) which serve as the building blocks of homooligomers (By similarity). Within homooligomers, the zinc-binding motif is created from residues of 3 different molecules. His-100 and Glu-102 from one molecule are ligands of the zinc ion, and His-107 and His-154 residues from additional molecules complete the site with tetrahedral coordination geometry (By similarity). Part of a complex required for lens intermediate filament formation composed of BFSP1, BFSP2 and CRYAA (By similarity).</text>
</comment>
<comment type="subcellular location">
    <subcellularLocation>
        <location evidence="3">Cytoplasm</location>
    </subcellularLocation>
    <subcellularLocation>
        <location evidence="3">Nucleus</location>
    </subcellularLocation>
    <text evidence="3">Translocates to the nucleus during heat shock and resides in sub-nuclear structures known as SC35 speckles or nuclear splicing speckles.</text>
</comment>
<comment type="PTM">
    <text evidence="3">Undergoes age-dependent proteolytical cleavage at the C-terminus.</text>
</comment>
<comment type="similarity">
    <text evidence="4">Belongs to the small heat shock protein (HSP20) family.</text>
</comment>
<organism>
    <name type="scientific">Orycteropus afer</name>
    <name type="common">Aardvark</name>
    <dbReference type="NCBI Taxonomy" id="9818"/>
    <lineage>
        <taxon>Eukaryota</taxon>
        <taxon>Metazoa</taxon>
        <taxon>Chordata</taxon>
        <taxon>Craniata</taxon>
        <taxon>Vertebrata</taxon>
        <taxon>Euteleostomi</taxon>
        <taxon>Mammalia</taxon>
        <taxon>Eutheria</taxon>
        <taxon>Afrotheria</taxon>
        <taxon>Tubulidentata</taxon>
        <taxon>Orycteropodidae</taxon>
        <taxon>Orycteropus</taxon>
    </lineage>
</organism>